<comment type="function">
    <text evidence="2 3 4 5 6 7 8 9 11 12 13 14">DNA-dependent RNA polymerase catalyzes the transcription of DNA into RNA using the four ribonucleoside triphosphates as substrates. Second largest component of RNA polymerases IV and V which mediate short-interfering RNAs (siRNA) accumulation and subsequent RNA-directed DNA methylation-dependent (RdDM) transcriptional gene silencing (TGS) of endogenous repeated sequences, including transposable elements. Proposed to contribute to the polymerase catalytic activity and forms the polymerase active center together with the largest subunit. Also required for full erasure of methylation when the RNA trigger is withdrawn. Required for intercellular RNA interference (RNAi) leading to systemic post-transcriptional gene silencing. Involved in the maintenance of post-transcriptional RNA silencing. During interphase, mediates siRNA-independent heterochromatin association and methylation into chromocenters and condensation and cytosine methylation at pericentromeric major repeats. Required for complete maintenance of the 35S promoter homology-dependent TGS in transgenic plants and for the initial establishment of DNA methylation.</text>
</comment>
<comment type="catalytic activity">
    <reaction>
        <text>RNA(n) + a ribonucleoside 5'-triphosphate = RNA(n+1) + diphosphate</text>
        <dbReference type="Rhea" id="RHEA:21248"/>
        <dbReference type="Rhea" id="RHEA-COMP:14527"/>
        <dbReference type="Rhea" id="RHEA-COMP:17342"/>
        <dbReference type="ChEBI" id="CHEBI:33019"/>
        <dbReference type="ChEBI" id="CHEBI:61557"/>
        <dbReference type="ChEBI" id="CHEBI:140395"/>
        <dbReference type="EC" id="2.7.7.6"/>
    </reaction>
</comment>
<comment type="subunit">
    <text evidence="5 6 11 15 16">Component of the RNA polymerase IV and V complexes. Interacts with SSH1, NRPD1 and NRPE1.</text>
</comment>
<comment type="subcellular location">
    <subcellularLocation>
        <location evidence="3 5 6">Nucleus</location>
    </subcellularLocation>
    <text>Concentrated in numerous distinct foci around chromocenters.</text>
</comment>
<comment type="tissue specificity">
    <text evidence="3 10">Mostly expressed in seedlings, flowers and roots, present ubiquitously, except in sperm cells.</text>
</comment>
<comment type="disruption phenotype">
    <text evidence="2 3 4 5 6 8 9 11 12 13">Blocked in the perpetuation of CNN, CG and CNG methylation in repeated endogenous DNA. Reduction of heterochromatin association and methylation into chromocenters, coincident with decondensation and losses in cytosine methylation at pericentromeric major repeats such as 5S gene clusters and AtSN1 retroelements during interphase, independently of siRNA accumulation. Altered cell-to-cell movement of siRNA beyond the vasculature. Reduced 35S promoter homology-dependent transcriptional gene silencing (TGS) in transgenic plants.</text>
</comment>
<comment type="similarity">
    <text evidence="17">Belongs to the RNA polymerase beta chain family.</text>
</comment>
<comment type="sequence caution" evidence="17">
    <conflict type="erroneous initiation">
        <sequence resource="EMBL-CDS" id="BAD43874"/>
    </conflict>
    <text>Truncated N-terminus.</text>
</comment>
<feature type="chain" id="PRO_0000407924" description="DNA-directed RNA polymerases IV and V subunit 2">
    <location>
        <begin position="1"/>
        <end position="1172"/>
    </location>
</feature>
<feature type="zinc finger region" description="C4-type" evidence="1">
    <location>
        <begin position="1108"/>
        <end position="1136"/>
    </location>
</feature>
<feature type="binding site" evidence="1">
    <location>
        <position position="786"/>
    </location>
    <ligand>
        <name>Mg(2+)</name>
        <dbReference type="ChEBI" id="CHEBI:18420"/>
        <note>ligand shared with RPB1</note>
    </ligand>
</feature>
<feature type="binding site" evidence="1">
    <location>
        <position position="1108"/>
    </location>
    <ligand>
        <name>Zn(2+)</name>
        <dbReference type="ChEBI" id="CHEBI:29105"/>
    </ligand>
</feature>
<feature type="binding site" evidence="1">
    <location>
        <position position="1111"/>
    </location>
    <ligand>
        <name>Zn(2+)</name>
        <dbReference type="ChEBI" id="CHEBI:29105"/>
    </ligand>
</feature>
<feature type="binding site" evidence="1">
    <location>
        <position position="1133"/>
    </location>
    <ligand>
        <name>Zn(2+)</name>
        <dbReference type="ChEBI" id="CHEBI:29105"/>
    </ligand>
</feature>
<feature type="binding site" evidence="1">
    <location>
        <position position="1136"/>
    </location>
    <ligand>
        <name>Zn(2+)</name>
        <dbReference type="ChEBI" id="CHEBI:29105"/>
    </ligand>
</feature>
<feature type="mutagenesis site" description="In nrpd/e2-19; decreased DNA methylation." evidence="14">
    <original>R</original>
    <variation>Q</variation>
    <location>
        <position position="629"/>
    </location>
</feature>
<feature type="sequence conflict" description="In Ref. 5; BAD43874." evidence="17" ref="5">
    <original>K</original>
    <variation>E</variation>
    <location>
        <position position="1170"/>
    </location>
</feature>
<feature type="strand" evidence="18">
    <location>
        <begin position="24"/>
        <end position="26"/>
    </location>
</feature>
<feature type="helix" evidence="18">
    <location>
        <begin position="30"/>
        <end position="45"/>
    </location>
</feature>
<feature type="helix" evidence="18">
    <location>
        <begin position="50"/>
        <end position="61"/>
    </location>
</feature>
<feature type="helix" evidence="18">
    <location>
        <begin position="63"/>
        <end position="69"/>
    </location>
</feature>
<feature type="strand" evidence="18">
    <location>
        <begin position="95"/>
        <end position="102"/>
    </location>
</feature>
<feature type="strand" evidence="18">
    <location>
        <begin position="106"/>
        <end position="108"/>
    </location>
</feature>
<feature type="strand" evidence="18">
    <location>
        <begin position="110"/>
        <end position="115"/>
    </location>
</feature>
<feature type="helix" evidence="18">
    <location>
        <begin position="118"/>
        <end position="123"/>
    </location>
</feature>
<feature type="strand" evidence="18">
    <location>
        <begin position="129"/>
        <end position="138"/>
    </location>
</feature>
<feature type="strand" evidence="18">
    <location>
        <begin position="171"/>
        <end position="177"/>
    </location>
</feature>
<feature type="strand" evidence="18">
    <location>
        <begin position="182"/>
        <end position="184"/>
    </location>
</feature>
<feature type="strand" evidence="18">
    <location>
        <begin position="196"/>
        <end position="198"/>
    </location>
</feature>
<feature type="strand" evidence="18">
    <location>
        <begin position="208"/>
        <end position="217"/>
    </location>
</feature>
<feature type="strand" evidence="18">
    <location>
        <begin position="219"/>
        <end position="223"/>
    </location>
</feature>
<feature type="strand" evidence="18">
    <location>
        <begin position="225"/>
        <end position="227"/>
    </location>
</feature>
<feature type="strand" evidence="18">
    <location>
        <begin position="229"/>
        <end position="231"/>
    </location>
</feature>
<feature type="turn" evidence="18">
    <location>
        <begin position="232"/>
        <end position="234"/>
    </location>
</feature>
<feature type="strand" evidence="18">
    <location>
        <begin position="235"/>
        <end position="239"/>
    </location>
</feature>
<feature type="strand" evidence="18">
    <location>
        <begin position="242"/>
        <end position="244"/>
    </location>
</feature>
<feature type="strand" evidence="18">
    <location>
        <begin position="248"/>
        <end position="254"/>
    </location>
</feature>
<feature type="strand" evidence="18">
    <location>
        <begin position="265"/>
        <end position="274"/>
    </location>
</feature>
<feature type="helix" evidence="18">
    <location>
        <begin position="279"/>
        <end position="284"/>
    </location>
</feature>
<feature type="turn" evidence="18">
    <location>
        <begin position="285"/>
        <end position="287"/>
    </location>
</feature>
<feature type="helix" evidence="18">
    <location>
        <begin position="291"/>
        <end position="297"/>
    </location>
</feature>
<feature type="helix" evidence="18">
    <location>
        <begin position="305"/>
        <end position="321"/>
    </location>
</feature>
<feature type="turn" evidence="18">
    <location>
        <begin position="323"/>
        <end position="326"/>
    </location>
</feature>
<feature type="strand" evidence="18">
    <location>
        <begin position="327"/>
        <end position="329"/>
    </location>
</feature>
<feature type="helix" evidence="18">
    <location>
        <begin position="330"/>
        <end position="340"/>
    </location>
</feature>
<feature type="strand" evidence="18">
    <location>
        <begin position="342"/>
        <end position="344"/>
    </location>
</feature>
<feature type="helix" evidence="18">
    <location>
        <begin position="350"/>
        <end position="356"/>
    </location>
</feature>
<feature type="helix" evidence="18">
    <location>
        <begin position="367"/>
        <end position="383"/>
    </location>
</feature>
<feature type="strand" evidence="19">
    <location>
        <begin position="392"/>
        <end position="394"/>
    </location>
</feature>
<feature type="helix" evidence="19">
    <location>
        <begin position="395"/>
        <end position="397"/>
    </location>
</feature>
<feature type="strand" evidence="18">
    <location>
        <begin position="398"/>
        <end position="403"/>
    </location>
</feature>
<feature type="turn" evidence="18">
    <location>
        <begin position="404"/>
        <end position="407"/>
    </location>
</feature>
<feature type="helix" evidence="18">
    <location>
        <begin position="408"/>
        <end position="418"/>
    </location>
</feature>
<feature type="helix" evidence="18">
    <location>
        <begin position="420"/>
        <end position="426"/>
    </location>
</feature>
<feature type="helix" evidence="18">
    <location>
        <begin position="427"/>
        <end position="429"/>
    </location>
</feature>
<feature type="turn" evidence="18">
    <location>
        <begin position="439"/>
        <end position="442"/>
    </location>
</feature>
<feature type="helix" evidence="18">
    <location>
        <begin position="446"/>
        <end position="458"/>
    </location>
</feature>
<feature type="strand" evidence="18">
    <location>
        <begin position="467"/>
        <end position="469"/>
    </location>
</feature>
<feature type="strand" evidence="18">
    <location>
        <begin position="474"/>
        <end position="477"/>
    </location>
</feature>
<feature type="helix" evidence="18">
    <location>
        <begin position="483"/>
        <end position="489"/>
    </location>
</feature>
<feature type="strand" evidence="18">
    <location>
        <begin position="491"/>
        <end position="494"/>
    </location>
</feature>
<feature type="helix" evidence="18">
    <location>
        <begin position="511"/>
        <end position="513"/>
    </location>
</feature>
<feature type="turn" evidence="18">
    <location>
        <begin position="514"/>
        <end position="516"/>
    </location>
</feature>
<feature type="turn" evidence="18">
    <location>
        <begin position="526"/>
        <end position="530"/>
    </location>
</feature>
<feature type="strand" evidence="18">
    <location>
        <begin position="531"/>
        <end position="534"/>
    </location>
</feature>
<feature type="helix" evidence="18">
    <location>
        <begin position="549"/>
        <end position="552"/>
    </location>
</feature>
<feature type="turn" evidence="18">
    <location>
        <begin position="553"/>
        <end position="556"/>
    </location>
</feature>
<feature type="strand" evidence="18">
    <location>
        <begin position="564"/>
        <end position="566"/>
    </location>
</feature>
<feature type="strand" evidence="18">
    <location>
        <begin position="572"/>
        <end position="576"/>
    </location>
</feature>
<feature type="strand" evidence="18">
    <location>
        <begin position="579"/>
        <end position="585"/>
    </location>
</feature>
<feature type="helix" evidence="18">
    <location>
        <begin position="588"/>
        <end position="598"/>
    </location>
</feature>
<feature type="turn" evidence="18">
    <location>
        <begin position="599"/>
        <end position="601"/>
    </location>
</feature>
<feature type="strand" evidence="18">
    <location>
        <begin position="608"/>
        <end position="612"/>
    </location>
</feature>
<feature type="turn" evidence="18">
    <location>
        <begin position="613"/>
        <end position="616"/>
    </location>
</feature>
<feature type="strand" evidence="18">
    <location>
        <begin position="617"/>
        <end position="621"/>
    </location>
</feature>
<feature type="strand" evidence="18">
    <location>
        <begin position="628"/>
        <end position="632"/>
    </location>
</feature>
<feature type="turn" evidence="18">
    <location>
        <begin position="635"/>
        <end position="638"/>
    </location>
</feature>
<feature type="strand" evidence="18">
    <location>
        <begin position="639"/>
        <end position="641"/>
    </location>
</feature>
<feature type="helix" evidence="18">
    <location>
        <begin position="650"/>
        <end position="655"/>
    </location>
</feature>
<feature type="strand" evidence="18">
    <location>
        <begin position="658"/>
        <end position="663"/>
    </location>
</feature>
<feature type="turn" evidence="18">
    <location>
        <begin position="664"/>
        <end position="669"/>
    </location>
</feature>
<feature type="strand" evidence="19">
    <location>
        <begin position="672"/>
        <end position="674"/>
    </location>
</feature>
<feature type="strand" evidence="18">
    <location>
        <begin position="676"/>
        <end position="678"/>
    </location>
</feature>
<feature type="turn" evidence="18">
    <location>
        <begin position="679"/>
        <end position="681"/>
    </location>
</feature>
<feature type="strand" evidence="19">
    <location>
        <begin position="687"/>
        <end position="689"/>
    </location>
</feature>
<feature type="helix" evidence="18">
    <location>
        <begin position="693"/>
        <end position="696"/>
    </location>
</feature>
<feature type="turn" evidence="18">
    <location>
        <begin position="699"/>
        <end position="703"/>
    </location>
</feature>
<feature type="turn" evidence="18">
    <location>
        <begin position="705"/>
        <end position="709"/>
    </location>
</feature>
<feature type="helix" evidence="18">
    <location>
        <begin position="712"/>
        <end position="720"/>
    </location>
</feature>
<feature type="helix" evidence="18">
    <location>
        <begin position="722"/>
        <end position="725"/>
    </location>
</feature>
<feature type="strand" evidence="18">
    <location>
        <begin position="740"/>
        <end position="747"/>
    </location>
</feature>
<feature type="strand" evidence="18">
    <location>
        <begin position="752"/>
        <end position="754"/>
    </location>
</feature>
<feature type="helix" evidence="18">
    <location>
        <begin position="756"/>
        <end position="760"/>
    </location>
</feature>
<feature type="helix" evidence="18">
    <location>
        <begin position="764"/>
        <end position="766"/>
    </location>
</feature>
<feature type="strand" evidence="18">
    <location>
        <begin position="769"/>
        <end position="776"/>
    </location>
</feature>
<feature type="turn" evidence="18">
    <location>
        <begin position="780"/>
        <end position="786"/>
    </location>
</feature>
<feature type="strand" evidence="18">
    <location>
        <begin position="788"/>
        <end position="791"/>
    </location>
</feature>
<feature type="helix" evidence="18">
    <location>
        <begin position="792"/>
        <end position="795"/>
    </location>
</feature>
<feature type="turn" evidence="18">
    <location>
        <begin position="796"/>
        <end position="800"/>
    </location>
</feature>
<feature type="strand" evidence="18">
    <location>
        <begin position="802"/>
        <end position="812"/>
    </location>
</feature>
<feature type="strand" evidence="18">
    <location>
        <begin position="846"/>
        <end position="848"/>
    </location>
</feature>
<feature type="strand" evidence="18">
    <location>
        <begin position="859"/>
        <end position="861"/>
    </location>
</feature>
<feature type="strand" evidence="18">
    <location>
        <begin position="881"/>
        <end position="890"/>
    </location>
</feature>
<feature type="strand" evidence="18">
    <location>
        <begin position="896"/>
        <end position="906"/>
    </location>
</feature>
<feature type="strand" evidence="18">
    <location>
        <begin position="913"/>
        <end position="916"/>
    </location>
</feature>
<feature type="strand" evidence="18">
    <location>
        <begin position="923"/>
        <end position="928"/>
    </location>
</feature>
<feature type="helix" evidence="18">
    <location>
        <begin position="930"/>
        <end position="932"/>
    </location>
</feature>
<feature type="strand" evidence="18">
    <location>
        <begin position="943"/>
        <end position="946"/>
    </location>
</feature>
<feature type="helix" evidence="18">
    <location>
        <begin position="950"/>
        <end position="954"/>
    </location>
</feature>
<feature type="helix" evidence="18">
    <location>
        <begin position="959"/>
        <end position="970"/>
    </location>
</feature>
<feature type="helix" evidence="18">
    <location>
        <begin position="991"/>
        <end position="993"/>
    </location>
</feature>
<feature type="helix" evidence="18">
    <location>
        <begin position="997"/>
        <end position="1006"/>
    </location>
</feature>
<feature type="strand" evidence="18">
    <location>
        <begin position="1013"/>
        <end position="1015"/>
    </location>
</feature>
<feature type="turn" evidence="18">
    <location>
        <begin position="1020"/>
        <end position="1022"/>
    </location>
</feature>
<feature type="strand" evidence="18">
    <location>
        <begin position="1034"/>
        <end position="1039"/>
    </location>
</feature>
<feature type="helix" evidence="18">
    <location>
        <begin position="1044"/>
        <end position="1046"/>
    </location>
</feature>
<feature type="strand" evidence="18">
    <location>
        <begin position="1051"/>
        <end position="1053"/>
    </location>
</feature>
<feature type="turn" evidence="18">
    <location>
        <begin position="1058"/>
        <end position="1060"/>
    </location>
</feature>
<feature type="strand" evidence="18">
    <location>
        <begin position="1067"/>
        <end position="1069"/>
    </location>
</feature>
<feature type="strand" evidence="18">
    <location>
        <begin position="1073"/>
        <end position="1075"/>
    </location>
</feature>
<feature type="helix" evidence="18">
    <location>
        <begin position="1077"/>
        <end position="1084"/>
    </location>
</feature>
<feature type="turn" evidence="18">
    <location>
        <begin position="1085"/>
        <end position="1087"/>
    </location>
</feature>
<feature type="helix" evidence="18">
    <location>
        <begin position="1090"/>
        <end position="1094"/>
    </location>
</feature>
<feature type="turn" evidence="18">
    <location>
        <begin position="1095"/>
        <end position="1098"/>
    </location>
</feature>
<feature type="strand" evidence="18">
    <location>
        <begin position="1105"/>
        <end position="1111"/>
    </location>
</feature>
<feature type="strand" evidence="18">
    <location>
        <begin position="1134"/>
        <end position="1145"/>
    </location>
</feature>
<feature type="helix" evidence="18">
    <location>
        <begin position="1149"/>
        <end position="1158"/>
    </location>
</feature>
<feature type="turn" evidence="18">
    <location>
        <begin position="1159"/>
        <end position="1162"/>
    </location>
</feature>
<feature type="strand" evidence="18">
    <location>
        <begin position="1163"/>
        <end position="1169"/>
    </location>
</feature>
<accession>Q9LK40</accession>
<accession>Q67ZK6</accession>
<sequence>MPDMDIDVKDLEEFEATTGEINLSELGEGFLQSFCKKAATSFFDKYGLISHQLNSYNYFIEHGLQNVFQSFGEMLVEPSFDVVKKKDNDWRYATVKFGEVTVEKPTFFSDDKELEFLPWHARLQNMTYSARIKVNVQVEVFKNTVVKSDKFKTGQDNYVEKKILDVKKQDILIGSIPVMVKSILCKTSEKGKENCKKGDCAFDQGGYFVIKGAEKVFIAQEQMCTKRLWISNSPWTVSFRSENKRNRFIVRLSENEKAEDYKRREKVLTVYFLSTEIPVWLLFFALGVSSDKEAMDLIAFDGDDASITNSLIASIHVADAVCEAFRCGNNALTYVEQQIKSTKFPPAESVDECLHLYLFPGLQSLKKKARFLGYMVKCLLNSYAGKRKCENRDSFRNKRIELAGELLEREIRVHLAHARRKMTRAMQKHLSGDGDLKPIEHYLDASVITNGLSRAFSTGAWSHPFRKMERVSGVVANLGRANPLQTLIDLRRTRQQVLYTGKVGDARYPHPSHWGRVCFLSTPDGENCGLVKNMSLLGLVSTQSLESVVEKLFACGMEELMDDTCTPLFGKHKVLLNGDWVGLCADSESFVAELKSRRRQSELPREMEIKRDKDDNEVRIFTDAGRLLRPLLVVENLQKLKQEKPSQYPFDHLLDHGILELIGIEEEEDCNTAWGIKQLLKEPKIYTHCELDLSFLLGVSCAVVPFANHDHGRRVLYQSQKHCQQAIGFSSTNPNIRCDTLSQQLFYPQKPLFKTLASECLKKEVLFNGQNAIVAVNVHLGYNQEDSIVMNKASLERGMFRSEQIRSYKAEVDAKDSEKRKKMDELVQFGKTHSKIGKVDSLEDDGFPFIGANMSTGDIVIGRCTESGADHSIKLKHTERGIVQKVVLSSNDEGKNFAAVSLRQVRSPCLGDKFSSMHGQKGVLGYLEEQQNFPFTIQGIVPDIVINPHAFPSRQTPGQLLEAALSKGIACPIQKEGSSAAYTKLTRHATPFSTPGVTEITEQLHRAGFSRWGNERVYNGRSGEMMRSMIFMGPTFYQRLVHMSEDKVKFRNTGPVHPLTRQPVADRKRFGGIKFGEMERDCLIAHGASANLHERLFTLSDSSQMHICRKCKTYANVIERTPSSGRKIRGPYCRVCVSSDHVVRVYVPYGAKLLCQELFSMGITLNFDTKLC</sequence>
<name>NRPD2_ARATH</name>
<dbReference type="EC" id="2.7.7.6"/>
<dbReference type="EMBL" id="AY862891">
    <property type="protein sequence ID" value="AAW56422.1"/>
    <property type="molecule type" value="mRNA"/>
</dbReference>
<dbReference type="EMBL" id="AY935711">
    <property type="protein sequence ID" value="AAX73261.1"/>
    <property type="molecule type" value="mRNA"/>
</dbReference>
<dbReference type="EMBL" id="AP000377">
    <property type="protein sequence ID" value="BAB01854.1"/>
    <property type="molecule type" value="Genomic_DNA"/>
</dbReference>
<dbReference type="EMBL" id="CP002686">
    <property type="protein sequence ID" value="AEE76812.1"/>
    <property type="molecule type" value="Genomic_DNA"/>
</dbReference>
<dbReference type="EMBL" id="CP002686">
    <property type="protein sequence ID" value="AEE76813.1"/>
    <property type="molecule type" value="Genomic_DNA"/>
</dbReference>
<dbReference type="EMBL" id="AK176111">
    <property type="protein sequence ID" value="BAD43874.1"/>
    <property type="status" value="ALT_INIT"/>
    <property type="molecule type" value="mRNA"/>
</dbReference>
<dbReference type="RefSeq" id="NP_001189957.1">
    <property type="nucleotide sequence ID" value="NM_001203028.2"/>
</dbReference>
<dbReference type="RefSeq" id="NP_189020.2">
    <property type="nucleotide sequence ID" value="NM_113282.3"/>
</dbReference>
<dbReference type="PDB" id="7EU0">
    <property type="method" value="EM"/>
    <property type="resolution" value="3.16 A"/>
    <property type="chains" value="B=1-1172"/>
</dbReference>
<dbReference type="PDB" id="7EU1">
    <property type="method" value="EM"/>
    <property type="resolution" value="3.86 A"/>
    <property type="chains" value="B=1-1172"/>
</dbReference>
<dbReference type="PDB" id="8HYJ">
    <property type="method" value="EM"/>
    <property type="resolution" value="4.30 A"/>
    <property type="chains" value="B=1-1172"/>
</dbReference>
<dbReference type="PDB" id="8XMB">
    <property type="method" value="EM"/>
    <property type="resolution" value="3.40 A"/>
    <property type="chains" value="B=1-1172"/>
</dbReference>
<dbReference type="PDB" id="8XMC">
    <property type="method" value="EM"/>
    <property type="resolution" value="3.10 A"/>
    <property type="chains" value="B=1-1172"/>
</dbReference>
<dbReference type="PDB" id="8XMD">
    <property type="method" value="EM"/>
    <property type="resolution" value="3.40 A"/>
    <property type="chains" value="B=1-1172"/>
</dbReference>
<dbReference type="PDB" id="8XME">
    <property type="method" value="EM"/>
    <property type="resolution" value="3.10 A"/>
    <property type="chains" value="B=1-1172"/>
</dbReference>
<dbReference type="PDBsum" id="7EU0"/>
<dbReference type="PDBsum" id="7EU1"/>
<dbReference type="PDBsum" id="8HYJ"/>
<dbReference type="PDBsum" id="8XMB"/>
<dbReference type="PDBsum" id="8XMC"/>
<dbReference type="PDBsum" id="8XMD"/>
<dbReference type="PDBsum" id="8XME"/>
<dbReference type="EMDB" id="EMD-31305"/>
<dbReference type="EMDB" id="EMD-31306"/>
<dbReference type="EMDB" id="EMD-35086"/>
<dbReference type="EMDB" id="EMD-38470"/>
<dbReference type="EMDB" id="EMD-38471"/>
<dbReference type="EMDB" id="EMD-38472"/>
<dbReference type="EMDB" id="EMD-38473"/>
<dbReference type="SMR" id="Q9LK40"/>
<dbReference type="BioGRID" id="7292">
    <property type="interactions" value="39"/>
</dbReference>
<dbReference type="FunCoup" id="Q9LK40">
    <property type="interactions" value="1226"/>
</dbReference>
<dbReference type="IntAct" id="Q9LK40">
    <property type="interactions" value="1"/>
</dbReference>
<dbReference type="STRING" id="3702.Q9LK40"/>
<dbReference type="GlyGen" id="Q9LK40">
    <property type="glycosylation" value="1 site"/>
</dbReference>
<dbReference type="PaxDb" id="3702-AT3G23780.2"/>
<dbReference type="ProteomicsDB" id="250570"/>
<dbReference type="EnsemblPlants" id="AT3G23780.1">
    <property type="protein sequence ID" value="AT3G23780.1"/>
    <property type="gene ID" value="AT3G23780"/>
</dbReference>
<dbReference type="EnsemblPlants" id="AT3G23780.2">
    <property type="protein sequence ID" value="AT3G23780.2"/>
    <property type="gene ID" value="AT3G23780"/>
</dbReference>
<dbReference type="GeneID" id="821960"/>
<dbReference type="Gramene" id="AT3G23780.1">
    <property type="protein sequence ID" value="AT3G23780.1"/>
    <property type="gene ID" value="AT3G23780"/>
</dbReference>
<dbReference type="Gramene" id="AT3G23780.2">
    <property type="protein sequence ID" value="AT3G23780.2"/>
    <property type="gene ID" value="AT3G23780"/>
</dbReference>
<dbReference type="KEGG" id="ath:AT3G23780"/>
<dbReference type="Araport" id="AT3G23780"/>
<dbReference type="TAIR" id="AT3G23780">
    <property type="gene designation" value="NRPD2A"/>
</dbReference>
<dbReference type="eggNOG" id="KOG0214">
    <property type="taxonomic scope" value="Eukaryota"/>
</dbReference>
<dbReference type="HOGENOM" id="CLU_000524_5_2_1"/>
<dbReference type="InParanoid" id="Q9LK40"/>
<dbReference type="OMA" id="EVQFAMD"/>
<dbReference type="PhylomeDB" id="Q9LK40"/>
<dbReference type="PRO" id="PR:Q9LK40"/>
<dbReference type="Proteomes" id="UP000006548">
    <property type="component" value="Chromosome 3"/>
</dbReference>
<dbReference type="ExpressionAtlas" id="Q9LK40">
    <property type="expression patterns" value="baseline and differential"/>
</dbReference>
<dbReference type="GO" id="GO:0000792">
    <property type="term" value="C:heterochromatin"/>
    <property type="evidence" value="ECO:0000314"/>
    <property type="project" value="TAIR"/>
</dbReference>
<dbReference type="GO" id="GO:0005739">
    <property type="term" value="C:mitochondrion"/>
    <property type="evidence" value="ECO:0007669"/>
    <property type="project" value="GOC"/>
</dbReference>
<dbReference type="GO" id="GO:0005634">
    <property type="term" value="C:nucleus"/>
    <property type="evidence" value="ECO:0000314"/>
    <property type="project" value="UniProtKB"/>
</dbReference>
<dbReference type="GO" id="GO:0009536">
    <property type="term" value="C:plastid"/>
    <property type="evidence" value="ECO:0007669"/>
    <property type="project" value="GOC"/>
</dbReference>
<dbReference type="GO" id="GO:0030880">
    <property type="term" value="C:RNA polymerase complex"/>
    <property type="evidence" value="ECO:0000314"/>
    <property type="project" value="TAIR"/>
</dbReference>
<dbReference type="GO" id="GO:0000418">
    <property type="term" value="C:RNA polymerase IV complex"/>
    <property type="evidence" value="ECO:0000314"/>
    <property type="project" value="UniProtKB"/>
</dbReference>
<dbReference type="GO" id="GO:0000419">
    <property type="term" value="C:RNA polymerase V complex"/>
    <property type="evidence" value="ECO:0000314"/>
    <property type="project" value="UniProtKB"/>
</dbReference>
<dbReference type="GO" id="GO:0003677">
    <property type="term" value="F:DNA binding"/>
    <property type="evidence" value="ECO:0007669"/>
    <property type="project" value="InterPro"/>
</dbReference>
<dbReference type="GO" id="GO:0003899">
    <property type="term" value="F:DNA-directed RNA polymerase activity"/>
    <property type="evidence" value="ECO:0000250"/>
    <property type="project" value="TAIR"/>
</dbReference>
<dbReference type="GO" id="GO:0032549">
    <property type="term" value="F:ribonucleoside binding"/>
    <property type="evidence" value="ECO:0007669"/>
    <property type="project" value="InterPro"/>
</dbReference>
<dbReference type="GO" id="GO:0008270">
    <property type="term" value="F:zinc ion binding"/>
    <property type="evidence" value="ECO:0007669"/>
    <property type="project" value="UniProtKB-KW"/>
</dbReference>
<dbReference type="GO" id="GO:0050832">
    <property type="term" value="P:defense response to fungus"/>
    <property type="evidence" value="ECO:0000315"/>
    <property type="project" value="TAIR"/>
</dbReference>
<dbReference type="GO" id="GO:0006351">
    <property type="term" value="P:DNA-templated transcription"/>
    <property type="evidence" value="ECO:0007669"/>
    <property type="project" value="InterPro"/>
</dbReference>
<dbReference type="GO" id="GO:0080188">
    <property type="term" value="P:gene silencing by siRNA-directed DNA methylation"/>
    <property type="evidence" value="ECO:0000315"/>
    <property type="project" value="FlyBase"/>
</dbReference>
<dbReference type="GO" id="GO:0050776">
    <property type="term" value="P:regulation of immune response"/>
    <property type="evidence" value="ECO:0000315"/>
    <property type="project" value="TAIR"/>
</dbReference>
<dbReference type="GO" id="GO:0031047">
    <property type="term" value="P:regulatory ncRNA-mediated gene silencing"/>
    <property type="evidence" value="ECO:0000315"/>
    <property type="project" value="TAIR"/>
</dbReference>
<dbReference type="GO" id="GO:0035194">
    <property type="term" value="P:regulatory ncRNA-mediated post-transcriptional gene silencing"/>
    <property type="evidence" value="ECO:0000315"/>
    <property type="project" value="TAIR"/>
</dbReference>
<dbReference type="GO" id="GO:0030422">
    <property type="term" value="P:siRNA processing"/>
    <property type="evidence" value="ECO:0000315"/>
    <property type="project" value="TAIR"/>
</dbReference>
<dbReference type="GO" id="GO:0141007">
    <property type="term" value="P:transposable element silencing by siRNA-mediated heterochromatin formation"/>
    <property type="evidence" value="ECO:0000315"/>
    <property type="project" value="FlyBase"/>
</dbReference>
<dbReference type="CDD" id="cd00653">
    <property type="entry name" value="RNA_pol_B_RPB2"/>
    <property type="match status" value="1"/>
</dbReference>
<dbReference type="FunFam" id="2.40.50.150:FF:000005">
    <property type="entry name" value="DNA-directed RNA polymerase subunit beta"/>
    <property type="match status" value="1"/>
</dbReference>
<dbReference type="FunFam" id="3.90.1100.10:FF:000012">
    <property type="entry name" value="DNA-directed RNA polymerase subunit beta"/>
    <property type="match status" value="1"/>
</dbReference>
<dbReference type="FunFam" id="3.90.1100.10:FF:000015">
    <property type="entry name" value="DNA-directed RNA polymerase subunit beta"/>
    <property type="match status" value="1"/>
</dbReference>
<dbReference type="FunFam" id="3.90.1110.10:FF:000010">
    <property type="entry name" value="DNA-directed RNA polymerase subunit beta"/>
    <property type="match status" value="1"/>
</dbReference>
<dbReference type="FunFam" id="3.90.1800.10:FF:000006">
    <property type="entry name" value="DNA-directed RNA polymerase subunit beta"/>
    <property type="match status" value="1"/>
</dbReference>
<dbReference type="Gene3D" id="2.40.50.150">
    <property type="match status" value="1"/>
</dbReference>
<dbReference type="Gene3D" id="3.90.1100.10">
    <property type="match status" value="2"/>
</dbReference>
<dbReference type="Gene3D" id="2.40.270.10">
    <property type="entry name" value="DNA-directed RNA polymerase, subunit 2, domain 6"/>
    <property type="match status" value="1"/>
</dbReference>
<dbReference type="Gene3D" id="3.90.1800.10">
    <property type="entry name" value="RNA polymerase alpha subunit dimerisation domain"/>
    <property type="match status" value="1"/>
</dbReference>
<dbReference type="Gene3D" id="3.90.1110.10">
    <property type="entry name" value="RNA polymerase Rpb2, domain 2"/>
    <property type="match status" value="1"/>
</dbReference>
<dbReference type="InterPro" id="IPR015712">
    <property type="entry name" value="DNA-dir_RNA_pol_su2"/>
</dbReference>
<dbReference type="InterPro" id="IPR007120">
    <property type="entry name" value="DNA-dir_RNAP_su2_dom"/>
</dbReference>
<dbReference type="InterPro" id="IPR037033">
    <property type="entry name" value="DNA-dir_RNAP_su2_hyb_sf"/>
</dbReference>
<dbReference type="InterPro" id="IPR007121">
    <property type="entry name" value="RNA_pol_bsu_CS"/>
</dbReference>
<dbReference type="InterPro" id="IPR007644">
    <property type="entry name" value="RNA_pol_bsu_protrusion"/>
</dbReference>
<dbReference type="InterPro" id="IPR007642">
    <property type="entry name" value="RNA_pol_Rpb2_2"/>
</dbReference>
<dbReference type="InterPro" id="IPR037034">
    <property type="entry name" value="RNA_pol_Rpb2_2_sf"/>
</dbReference>
<dbReference type="InterPro" id="IPR007645">
    <property type="entry name" value="RNA_pol_Rpb2_3"/>
</dbReference>
<dbReference type="InterPro" id="IPR007646">
    <property type="entry name" value="RNA_pol_Rpb2_4"/>
</dbReference>
<dbReference type="InterPro" id="IPR007641">
    <property type="entry name" value="RNA_pol_Rpb2_7"/>
</dbReference>
<dbReference type="InterPro" id="IPR014724">
    <property type="entry name" value="RNA_pol_RPB2_OB-fold"/>
</dbReference>
<dbReference type="PANTHER" id="PTHR20856">
    <property type="entry name" value="DNA-DIRECTED RNA POLYMERASE I SUBUNIT 2"/>
    <property type="match status" value="1"/>
</dbReference>
<dbReference type="Pfam" id="PF04563">
    <property type="entry name" value="RNA_pol_Rpb2_1"/>
    <property type="match status" value="1"/>
</dbReference>
<dbReference type="Pfam" id="PF04561">
    <property type="entry name" value="RNA_pol_Rpb2_2"/>
    <property type="match status" value="1"/>
</dbReference>
<dbReference type="Pfam" id="PF04565">
    <property type="entry name" value="RNA_pol_Rpb2_3"/>
    <property type="match status" value="1"/>
</dbReference>
<dbReference type="Pfam" id="PF04566">
    <property type="entry name" value="RNA_pol_Rpb2_4"/>
    <property type="match status" value="1"/>
</dbReference>
<dbReference type="Pfam" id="PF00562">
    <property type="entry name" value="RNA_pol_Rpb2_6"/>
    <property type="match status" value="1"/>
</dbReference>
<dbReference type="Pfam" id="PF04560">
    <property type="entry name" value="RNA_pol_Rpb2_7"/>
    <property type="match status" value="1"/>
</dbReference>
<dbReference type="SUPFAM" id="SSF64484">
    <property type="entry name" value="beta and beta-prime subunits of DNA dependent RNA-polymerase"/>
    <property type="match status" value="1"/>
</dbReference>
<dbReference type="PROSITE" id="PS01166">
    <property type="entry name" value="RNA_POL_BETA"/>
    <property type="match status" value="1"/>
</dbReference>
<keyword id="KW-0002">3D-structure</keyword>
<keyword id="KW-0240">DNA-directed RNA polymerase</keyword>
<keyword id="KW-0460">Magnesium</keyword>
<keyword id="KW-0479">Metal-binding</keyword>
<keyword id="KW-0548">Nucleotidyltransferase</keyword>
<keyword id="KW-0539">Nucleus</keyword>
<keyword id="KW-1185">Reference proteome</keyword>
<keyword id="KW-0804">Transcription</keyword>
<keyword id="KW-0805">Transcription regulation</keyword>
<keyword id="KW-0808">Transferase</keyword>
<keyword id="KW-0862">Zinc</keyword>
<keyword id="KW-0863">Zinc-finger</keyword>
<protein>
    <recommendedName>
        <fullName>DNA-directed RNA polymerases IV and V subunit 2</fullName>
        <ecNumber>2.7.7.6</ecNumber>
    </recommendedName>
    <alternativeName>
        <fullName>DNA-directed RNA polymerase D subunit 2a</fullName>
        <shortName>AtNRPD2a</shortName>
        <shortName>Nuclear RNA polymerase D 2a</shortName>
    </alternativeName>
    <alternativeName>
        <fullName>Nuclear RNA polymerase E 2</fullName>
    </alternativeName>
    <alternativeName>
        <fullName>Protein DEFECTIVE IN MERISTEM SILENCING 2</fullName>
    </alternativeName>
    <alternativeName>
        <fullName>Protein DEFECTIVE IN RNA-DIRECTED DNA METHYLATION 2</fullName>
    </alternativeName>
    <alternativeName>
        <fullName>RNA polymerase IV subunit 2a</fullName>
        <shortName>POL IV 2a</shortName>
    </alternativeName>
</protein>
<organism>
    <name type="scientific">Arabidopsis thaliana</name>
    <name type="common">Mouse-ear cress</name>
    <dbReference type="NCBI Taxonomy" id="3702"/>
    <lineage>
        <taxon>Eukaryota</taxon>
        <taxon>Viridiplantae</taxon>
        <taxon>Streptophyta</taxon>
        <taxon>Embryophyta</taxon>
        <taxon>Tracheophyta</taxon>
        <taxon>Spermatophyta</taxon>
        <taxon>Magnoliopsida</taxon>
        <taxon>eudicotyledons</taxon>
        <taxon>Gunneridae</taxon>
        <taxon>Pentapetalae</taxon>
        <taxon>rosids</taxon>
        <taxon>malvids</taxon>
        <taxon>Brassicales</taxon>
        <taxon>Brassicaceae</taxon>
        <taxon>Camelineae</taxon>
        <taxon>Arabidopsis</taxon>
    </lineage>
</organism>
<reference key="1">
    <citation type="journal article" date="2005" name="Cell">
        <title>Plant nuclear RNA polymerase IV mediates siRNA and DNA methylation-dependent heterochromatin formation.</title>
        <authorList>
            <person name="Onodera Y."/>
            <person name="Haag J.R."/>
            <person name="Ream T."/>
            <person name="Nunes P.C."/>
            <person name="Pontes O."/>
            <person name="Pikaard C.S."/>
        </authorList>
    </citation>
    <scope>NUCLEOTIDE SEQUENCE [MRNA]</scope>
    <scope>FUNCTION</scope>
    <scope>DISRUPTION PHENOTYPE</scope>
    <scope>TISSUE SPECIFICITY</scope>
    <scope>SUBCELLULAR LOCATION</scope>
    <source>
        <strain>cv. Columbia</strain>
    </source>
</reference>
<reference key="2">
    <citation type="journal article" date="2005" name="Genes Dev.">
        <title>Reinforcement of silencing at transposons and highly repeated sequences requires the concerted action of two distinct RNA polymerases IV in Arabidopsis.</title>
        <authorList>
            <person name="Pontier D."/>
            <person name="Yahubyan G."/>
            <person name="Vega D."/>
            <person name="Bulski A."/>
            <person name="Saez-Vasquez J."/>
            <person name="Hakimi M.-A."/>
            <person name="Lerbs-Mache S."/>
            <person name="Colot V."/>
            <person name="Lagrange T."/>
        </authorList>
    </citation>
    <scope>NUCLEOTIDE SEQUENCE [MRNA]</scope>
    <scope>SUBCELLULAR LOCATION</scope>
    <scope>FUNCTION</scope>
    <scope>DISRUPTION PHENOTYPE</scope>
    <scope>SUBUNIT</scope>
</reference>
<reference key="3">
    <citation type="journal article" date="2000" name="DNA Res.">
        <title>Structural analysis of Arabidopsis thaliana chromosome 3. II. Sequence features of the 4,251,695 bp regions covered by 90 P1, TAC and BAC clones.</title>
        <authorList>
            <person name="Kaneko T."/>
            <person name="Katoh T."/>
            <person name="Sato S."/>
            <person name="Nakamura Y."/>
            <person name="Asamizu E."/>
            <person name="Tabata S."/>
        </authorList>
    </citation>
    <scope>NUCLEOTIDE SEQUENCE [LARGE SCALE GENOMIC DNA]</scope>
    <source>
        <strain>cv. Columbia</strain>
    </source>
</reference>
<reference key="4">
    <citation type="journal article" date="2017" name="Plant J.">
        <title>Araport11: a complete reannotation of the Arabidopsis thaliana reference genome.</title>
        <authorList>
            <person name="Cheng C.Y."/>
            <person name="Krishnakumar V."/>
            <person name="Chan A.P."/>
            <person name="Thibaud-Nissen F."/>
            <person name="Schobel S."/>
            <person name="Town C.D."/>
        </authorList>
    </citation>
    <scope>GENOME REANNOTATION</scope>
    <source>
        <strain>cv. Columbia</strain>
    </source>
</reference>
<reference key="5">
    <citation type="submission" date="2004-09" db="EMBL/GenBank/DDBJ databases">
        <title>Large-scale analysis of RIKEN Arabidopsis full-length (RAFL) cDNAs.</title>
        <authorList>
            <person name="Totoki Y."/>
            <person name="Seki M."/>
            <person name="Ishida J."/>
            <person name="Nakajima M."/>
            <person name="Enju A."/>
            <person name="Kamiya A."/>
            <person name="Narusaka M."/>
            <person name="Shin-i T."/>
            <person name="Nakagawa M."/>
            <person name="Sakamoto N."/>
            <person name="Oishi K."/>
            <person name="Kohara Y."/>
            <person name="Kobayashi M."/>
            <person name="Toyoda A."/>
            <person name="Sakaki Y."/>
            <person name="Sakurai T."/>
            <person name="Iida K."/>
            <person name="Akiyama K."/>
            <person name="Satou M."/>
            <person name="Toyoda T."/>
            <person name="Konagaya A."/>
            <person name="Carninci P."/>
            <person name="Kawai J."/>
            <person name="Hayashizaki Y."/>
            <person name="Shinozaki K."/>
        </authorList>
    </citation>
    <scope>NUCLEOTIDE SEQUENCE [LARGE SCALE MRNA] OF 498-1172</scope>
    <source>
        <strain>cv. Columbia</strain>
    </source>
</reference>
<reference key="6">
    <citation type="journal article" date="2005" name="Nat. Genet.">
        <title>Atypical RNA polymerase subunits required for RNA-directed DNA methylation.</title>
        <authorList>
            <person name="Kanno T."/>
            <person name="Huettel B."/>
            <person name="Mette M.F."/>
            <person name="Aufsatz W."/>
            <person name="Jaligot E."/>
            <person name="Daxinger L."/>
            <person name="Kreil D.P."/>
            <person name="Matzke M."/>
            <person name="Matzke A.J.M."/>
        </authorList>
    </citation>
    <scope>FUNCTION</scope>
    <scope>DISRUPTION PHENOTYPE</scope>
    <source>
        <strain>cv. Columbia</strain>
    </source>
</reference>
<reference key="7">
    <citation type="journal article" date="2005" name="Science">
        <title>RNA polymerase IV directs silencing of endogenous DNA.</title>
        <authorList>
            <person name="Herr A.J."/>
            <person name="Jensen M.B."/>
            <person name="Dalmay T."/>
            <person name="Baulcombe D.C."/>
        </authorList>
    </citation>
    <scope>FUNCTION</scope>
    <scope>DISRUPTION PHENOTYPE</scope>
</reference>
<reference key="8">
    <citation type="journal article" date="2006" name="Cell">
        <title>The Arabidopsis chromatin-modifying nuclear siRNA pathway involves a nucleolar RNA processing center.</title>
        <authorList>
            <person name="Pontes O."/>
            <person name="Li C.F."/>
            <person name="Nunes P.C."/>
            <person name="Haag J."/>
            <person name="Ream T."/>
            <person name="Vitins A."/>
            <person name="Jacobsen S.E."/>
            <person name="Pikaard C.S."/>
        </authorList>
    </citation>
    <scope>FUNCTION</scope>
    <scope>DISRUPTION PHENOTYPE</scope>
    <scope>SUBCELLULAR LOCATION</scope>
    <scope>INTERACTION WITH NRPD1 AND NRPE1</scope>
</reference>
<reference key="9">
    <citation type="journal article" date="2007" name="Biochim. Biophys. Acta">
        <title>RNA-directed DNA methylation mediated by DRD1 and Pol IVb: a versatile pathway for transcriptional gene silencing in plants.</title>
        <authorList>
            <person name="Huettel B."/>
            <person name="Kanno T."/>
            <person name="Daxinger L."/>
            <person name="Bucher E."/>
            <person name="van der Winden J."/>
            <person name="Matzke A.J.M."/>
            <person name="Matzke M."/>
        </authorList>
    </citation>
    <scope>REVIEW</scope>
</reference>
<reference key="10">
    <citation type="journal article" date="2007" name="Plant Cell">
        <title>An SNF2 protein associated with nuclear RNA silencing and the spread of a silencing signal between cells in Arabidopsis.</title>
        <authorList>
            <person name="Smith L.M."/>
            <person name="Pontes O."/>
            <person name="Searle I."/>
            <person name="Yelina N."/>
            <person name="Yousafzai F.K."/>
            <person name="Herr A.J."/>
            <person name="Pikaard C.S."/>
            <person name="Baulcombe D.C."/>
        </authorList>
    </citation>
    <scope>FUNCTION</scope>
    <scope>DISRUPTION PHENOTYPE</scope>
</reference>
<reference key="11">
    <citation type="journal article" date="2007" name="Proc. Natl. Acad. Sci. U.S.A.">
        <title>Role of RNA polymerase IV in plant small RNA metabolism.</title>
        <authorList>
            <person name="Zhang X."/>
            <person name="Henderson I.R."/>
            <person name="Lu C."/>
            <person name="Green P.J."/>
            <person name="Jacobsen S.E."/>
        </authorList>
    </citation>
    <scope>FUNCTION</scope>
    <source>
        <strain>cv. Columbia</strain>
    </source>
</reference>
<reference key="12">
    <citation type="journal article" date="2008" name="Nat. Genet.">
        <title>A structural-maintenance-of-chromosomes hinge domain-containing protein is required for RNA-directed DNA methylation.</title>
        <authorList>
            <person name="Kanno T."/>
            <person name="Bucher E."/>
            <person name="Daxinger L."/>
            <person name="Huettel B."/>
            <person name="Boehmdorfer G."/>
            <person name="Gregor W."/>
            <person name="Kreil D.P."/>
            <person name="Matzke M."/>
            <person name="Matzke A.J."/>
        </authorList>
    </citation>
    <scope>FUNCTION</scope>
    <scope>DISRUPTION PHENOTYPE</scope>
    <source>
        <strain>cv. Columbia</strain>
    </source>
</reference>
<reference key="13">
    <citation type="journal article" date="2008" name="Plant Physiol.">
        <title>Comparative transcriptomics of Arabidopsis sperm cells.</title>
        <authorList>
            <person name="Borges F."/>
            <person name="Gomes G."/>
            <person name="Gardner R."/>
            <person name="Moreno N."/>
            <person name="McCormick S."/>
            <person name="Feijo J.A."/>
            <person name="Becker J.D."/>
        </authorList>
    </citation>
    <scope>TISSUE SPECIFICITY</scope>
</reference>
<reference key="14">
    <citation type="journal article" date="2009" name="Mol. Cell">
        <title>Subunit compositions of the RNA-silencing enzymes Pol IV and Pol V reveal their origins as specialized forms of RNA polymerase II.</title>
        <authorList>
            <person name="Ream T.S."/>
            <person name="Haag J.R."/>
            <person name="Wierzbicki A.T."/>
            <person name="Nicora C.D."/>
            <person name="Norbeck A.D."/>
            <person name="Zhu J.K."/>
            <person name="Hagen G."/>
            <person name="Guilfoyle T.J."/>
            <person name="Pasa-Tolic L."/>
            <person name="Pikaard C.S."/>
        </authorList>
    </citation>
    <scope>FUNCTION</scope>
    <scope>IDENTIFICATION BY MASS SPECTROMETRY</scope>
    <scope>DISRUPTION PHENOTYPE</scope>
    <scope>GENE FAMILY</scope>
    <scope>SUBUNIT</scope>
    <scope>NOMENCLATURE</scope>
</reference>
<reference key="15">
    <citation type="journal article" date="2009" name="Mol. Plant">
        <title>RNA polymerase V functions in Arabidopsis interphase heterochromatin organization independently of the 24-nt siRNA-directed DNA methylation pathway.</title>
        <authorList>
            <person name="Pontes O."/>
            <person name="Costa-Nunes P."/>
            <person name="Vithayathil P."/>
            <person name="Pikaard C.S."/>
        </authorList>
    </citation>
    <scope>FUNCTION</scope>
    <scope>DISRUPTION PHENOTYPE</scope>
</reference>
<reference key="16">
    <citation type="journal article" date="2010" name="Plant J.">
        <title>Transcriptional silencing induced by Arabidopsis T-DNA mutants is associated with 35S promoter siRNAs and requires genes involved in siRNA-mediated chromatin silencing.</title>
        <authorList>
            <person name="Mlotshwa S."/>
            <person name="Pruss G.J."/>
            <person name="Gao Z."/>
            <person name="Mgutshini N.L."/>
            <person name="Li J."/>
            <person name="Chen X."/>
            <person name="Bowman L.H."/>
            <person name="Vance V."/>
        </authorList>
    </citation>
    <scope>FUNCTION</scope>
    <scope>DISRUPTION PHENOTYPE</scope>
</reference>
<reference key="17">
    <citation type="journal article" date="2011" name="Epigenetics">
        <title>Identification of genes required for de novo DNA methylation in Arabidopsis.</title>
        <authorList>
            <person name="Greenberg M.V."/>
            <person name="Ausin I."/>
            <person name="Chan S.W."/>
            <person name="Cokus S.J."/>
            <person name="Cuperus J.T."/>
            <person name="Feng S."/>
            <person name="Law J.A."/>
            <person name="Chu C."/>
            <person name="Pellegrini M."/>
            <person name="Carrington J.C."/>
            <person name="Jacobsen S.E."/>
        </authorList>
    </citation>
    <scope>FUNCTION</scope>
    <scope>MUTAGENESIS OF ARG-629</scope>
</reference>
<reference key="18">
    <citation type="journal article" date="2011" name="PLoS Genet.">
        <title>SHH1, a homeodomain protein required for DNA methylation, as well as RDR2, RDM4, and chromatin remodeling factors, associate with RNA polymerase IV.</title>
        <authorList>
            <person name="Law J.A."/>
            <person name="Vashisht A.A."/>
            <person name="Wohlschlegel J.A."/>
            <person name="Jacobsen S.E."/>
        </authorList>
    </citation>
    <scope>IDENTIFICATION BY MASS SPECTROMETRY</scope>
    <scope>INTERACTION WITH NRPD1</scope>
    <scope>SUBUNIT</scope>
</reference>
<reference key="19">
    <citation type="journal article" date="2013" name="Proc. Natl. Acad. Sci. U.S.A.">
        <title>DTF1 is a core component of RNA-directed DNA methylation and may assist in the recruitment of Pol IV.</title>
        <authorList>
            <person name="Zhang H."/>
            <person name="Ma Z.Y."/>
            <person name="Zeng L."/>
            <person name="Tanaka K."/>
            <person name="Zhang C.J."/>
            <person name="Ma J."/>
            <person name="Bai G."/>
            <person name="Wang P."/>
            <person name="Zhang S.W."/>
            <person name="Liu Z.W."/>
            <person name="Cai T."/>
            <person name="Tang K."/>
            <person name="Liu R."/>
            <person name="Shi X."/>
            <person name="He X.J."/>
            <person name="Zhu J.K."/>
        </authorList>
    </citation>
    <scope>IDENTIFICATION BY MASS SPECTROMETRY</scope>
    <scope>INTERACTION WITH SHH1</scope>
</reference>
<gene>
    <name type="primary">NRPD2</name>
    <name type="synonym">DMS2</name>
    <name type="synonym">DRD2</name>
    <name type="synonym">NRPD2a</name>
    <name type="synonym">NRPE2</name>
    <name type="synonym">RPD2a</name>
    <name type="ordered locus">At3g23780</name>
    <name type="ORF">MYM9.13</name>
</gene>
<evidence type="ECO:0000250" key="1"/>
<evidence type="ECO:0000269" key="2">
    <source>
    </source>
</evidence>
<evidence type="ECO:0000269" key="3">
    <source>
    </source>
</evidence>
<evidence type="ECO:0000269" key="4">
    <source>
    </source>
</evidence>
<evidence type="ECO:0000269" key="5">
    <source>
    </source>
</evidence>
<evidence type="ECO:0000269" key="6">
    <source>
    </source>
</evidence>
<evidence type="ECO:0000269" key="7">
    <source>
    </source>
</evidence>
<evidence type="ECO:0000269" key="8">
    <source>
    </source>
</evidence>
<evidence type="ECO:0000269" key="9">
    <source>
    </source>
</evidence>
<evidence type="ECO:0000269" key="10">
    <source>
    </source>
</evidence>
<evidence type="ECO:0000269" key="11">
    <source>
    </source>
</evidence>
<evidence type="ECO:0000269" key="12">
    <source>
    </source>
</evidence>
<evidence type="ECO:0000269" key="13">
    <source>
    </source>
</evidence>
<evidence type="ECO:0000269" key="14">
    <source>
    </source>
</evidence>
<evidence type="ECO:0000269" key="15">
    <source>
    </source>
</evidence>
<evidence type="ECO:0000269" key="16">
    <source>
    </source>
</evidence>
<evidence type="ECO:0000305" key="17"/>
<evidence type="ECO:0007829" key="18">
    <source>
        <dbReference type="PDB" id="7EU0"/>
    </source>
</evidence>
<evidence type="ECO:0007829" key="19">
    <source>
        <dbReference type="PDB" id="8XMD"/>
    </source>
</evidence>
<proteinExistence type="evidence at protein level"/>